<gene>
    <name evidence="1" type="primary">rpsP</name>
    <name type="ordered locus">SeSA_A2871</name>
</gene>
<accession>B4TS56</accession>
<evidence type="ECO:0000255" key="1">
    <source>
        <dbReference type="HAMAP-Rule" id="MF_00385"/>
    </source>
</evidence>
<evidence type="ECO:0000305" key="2"/>
<reference key="1">
    <citation type="journal article" date="2011" name="J. Bacteriol.">
        <title>Comparative genomics of 28 Salmonella enterica isolates: evidence for CRISPR-mediated adaptive sublineage evolution.</title>
        <authorList>
            <person name="Fricke W.F."/>
            <person name="Mammel M.K."/>
            <person name="McDermott P.F."/>
            <person name="Tartera C."/>
            <person name="White D.G."/>
            <person name="Leclerc J.E."/>
            <person name="Ravel J."/>
            <person name="Cebula T.A."/>
        </authorList>
    </citation>
    <scope>NUCLEOTIDE SEQUENCE [LARGE SCALE GENOMIC DNA]</scope>
    <source>
        <strain>CVM19633</strain>
    </source>
</reference>
<protein>
    <recommendedName>
        <fullName evidence="1">Small ribosomal subunit protein bS16</fullName>
    </recommendedName>
    <alternativeName>
        <fullName evidence="2">30S ribosomal protein S16</fullName>
    </alternativeName>
</protein>
<comment type="similarity">
    <text evidence="1">Belongs to the bacterial ribosomal protein bS16 family.</text>
</comment>
<feature type="chain" id="PRO_1000196472" description="Small ribosomal subunit protein bS16">
    <location>
        <begin position="1"/>
        <end position="82"/>
    </location>
</feature>
<keyword id="KW-0687">Ribonucleoprotein</keyword>
<keyword id="KW-0689">Ribosomal protein</keyword>
<dbReference type="EMBL" id="CP001127">
    <property type="protein sequence ID" value="ACF90088.1"/>
    <property type="molecule type" value="Genomic_DNA"/>
</dbReference>
<dbReference type="RefSeq" id="WP_000256453.1">
    <property type="nucleotide sequence ID" value="NC_011094.1"/>
</dbReference>
<dbReference type="SMR" id="B4TS56"/>
<dbReference type="KEGG" id="sew:SeSA_A2871"/>
<dbReference type="HOGENOM" id="CLU_100590_5_1_6"/>
<dbReference type="Proteomes" id="UP000001865">
    <property type="component" value="Chromosome"/>
</dbReference>
<dbReference type="GO" id="GO:0005737">
    <property type="term" value="C:cytoplasm"/>
    <property type="evidence" value="ECO:0007669"/>
    <property type="project" value="UniProtKB-ARBA"/>
</dbReference>
<dbReference type="GO" id="GO:0015935">
    <property type="term" value="C:small ribosomal subunit"/>
    <property type="evidence" value="ECO:0007669"/>
    <property type="project" value="TreeGrafter"/>
</dbReference>
<dbReference type="GO" id="GO:0003735">
    <property type="term" value="F:structural constituent of ribosome"/>
    <property type="evidence" value="ECO:0007669"/>
    <property type="project" value="InterPro"/>
</dbReference>
<dbReference type="GO" id="GO:0006412">
    <property type="term" value="P:translation"/>
    <property type="evidence" value="ECO:0007669"/>
    <property type="project" value="UniProtKB-UniRule"/>
</dbReference>
<dbReference type="FunFam" id="3.30.1320.10:FF:000001">
    <property type="entry name" value="30S ribosomal protein S16"/>
    <property type="match status" value="1"/>
</dbReference>
<dbReference type="Gene3D" id="3.30.1320.10">
    <property type="match status" value="1"/>
</dbReference>
<dbReference type="HAMAP" id="MF_00385">
    <property type="entry name" value="Ribosomal_bS16"/>
    <property type="match status" value="1"/>
</dbReference>
<dbReference type="InterPro" id="IPR000307">
    <property type="entry name" value="Ribosomal_bS16"/>
</dbReference>
<dbReference type="InterPro" id="IPR020592">
    <property type="entry name" value="Ribosomal_bS16_CS"/>
</dbReference>
<dbReference type="InterPro" id="IPR023803">
    <property type="entry name" value="Ribosomal_bS16_dom_sf"/>
</dbReference>
<dbReference type="NCBIfam" id="TIGR00002">
    <property type="entry name" value="S16"/>
    <property type="match status" value="1"/>
</dbReference>
<dbReference type="PANTHER" id="PTHR12919">
    <property type="entry name" value="30S RIBOSOMAL PROTEIN S16"/>
    <property type="match status" value="1"/>
</dbReference>
<dbReference type="PANTHER" id="PTHR12919:SF20">
    <property type="entry name" value="SMALL RIBOSOMAL SUBUNIT PROTEIN BS16M"/>
    <property type="match status" value="1"/>
</dbReference>
<dbReference type="Pfam" id="PF00886">
    <property type="entry name" value="Ribosomal_S16"/>
    <property type="match status" value="1"/>
</dbReference>
<dbReference type="SUPFAM" id="SSF54565">
    <property type="entry name" value="Ribosomal protein S16"/>
    <property type="match status" value="1"/>
</dbReference>
<dbReference type="PROSITE" id="PS00732">
    <property type="entry name" value="RIBOSOMAL_S16"/>
    <property type="match status" value="1"/>
</dbReference>
<sequence>MVTIRLARHGAKKRPFYQVVVTDSRNARNGRFIERVGFFNPIASEKEEGTRLDLDRIAHWVGQGATISDRVAALIKEVKKAA</sequence>
<proteinExistence type="inferred from homology"/>
<organism>
    <name type="scientific">Salmonella schwarzengrund (strain CVM19633)</name>
    <dbReference type="NCBI Taxonomy" id="439843"/>
    <lineage>
        <taxon>Bacteria</taxon>
        <taxon>Pseudomonadati</taxon>
        <taxon>Pseudomonadota</taxon>
        <taxon>Gammaproteobacteria</taxon>
        <taxon>Enterobacterales</taxon>
        <taxon>Enterobacteriaceae</taxon>
        <taxon>Salmonella</taxon>
    </lineage>
</organism>
<name>RS16_SALSV</name>